<sequence>MMHLYWVALKSIWAKEIHRFMRIWVQTLVPPVITMTLYFIIFGNLIGSRIGDMHGFSYMQFIVPGLIMMSVITNAYANVASSFFGAKFQRNIEELLVAPVPTHVIIAGYVGGGVARGLFVGILVTAISLFFVPFQVHSWVFVALTLVLTAVLFSLAGLLNGVFAKTFDDISLVPTFVLTPLTYLGGVFYSLTLLPPFWQGLSHLNPIVYMISGFRYGFLGINDVPLVTTFGVLVVFIVAFYLICWSLIQRGRGLRS</sequence>
<protein>
    <recommendedName>
        <fullName>Inner membrane transport permease YadH</fullName>
    </recommendedName>
</protein>
<comment type="subcellular location">
    <subcellularLocation>
        <location evidence="1">Cell inner membrane</location>
        <topology evidence="1">Multi-pass membrane protein</topology>
    </subcellularLocation>
</comment>
<comment type="similarity">
    <text evidence="4">Belongs to the ABC-2 integral membrane protein family.</text>
</comment>
<accession>P0AFN8</accession>
<accession>P36880</accession>
<accession>P75657</accession>
<accession>Q8KMY9</accession>
<organism>
    <name type="scientific">Escherichia coli O157:H7</name>
    <dbReference type="NCBI Taxonomy" id="83334"/>
    <lineage>
        <taxon>Bacteria</taxon>
        <taxon>Pseudomonadati</taxon>
        <taxon>Pseudomonadota</taxon>
        <taxon>Gammaproteobacteria</taxon>
        <taxon>Enterobacterales</taxon>
        <taxon>Enterobacteriaceae</taxon>
        <taxon>Escherichia</taxon>
    </lineage>
</organism>
<evidence type="ECO:0000250" key="1"/>
<evidence type="ECO:0000255" key="2"/>
<evidence type="ECO:0000255" key="3">
    <source>
        <dbReference type="PROSITE-ProRule" id="PRU00442"/>
    </source>
</evidence>
<evidence type="ECO:0000305" key="4"/>
<reference key="1">
    <citation type="journal article" date="2001" name="Nature">
        <title>Genome sequence of enterohaemorrhagic Escherichia coli O157:H7.</title>
        <authorList>
            <person name="Perna N.T."/>
            <person name="Plunkett G. III"/>
            <person name="Burland V."/>
            <person name="Mau B."/>
            <person name="Glasner J.D."/>
            <person name="Rose D.J."/>
            <person name="Mayhew G.F."/>
            <person name="Evans P.S."/>
            <person name="Gregor J."/>
            <person name="Kirkpatrick H.A."/>
            <person name="Posfai G."/>
            <person name="Hackett J."/>
            <person name="Klink S."/>
            <person name="Boutin A."/>
            <person name="Shao Y."/>
            <person name="Miller L."/>
            <person name="Grotbeck E.J."/>
            <person name="Davis N.W."/>
            <person name="Lim A."/>
            <person name="Dimalanta E.T."/>
            <person name="Potamousis K."/>
            <person name="Apodaca J."/>
            <person name="Anantharaman T.S."/>
            <person name="Lin J."/>
            <person name="Yen G."/>
            <person name="Schwartz D.C."/>
            <person name="Welch R.A."/>
            <person name="Blattner F.R."/>
        </authorList>
    </citation>
    <scope>NUCLEOTIDE SEQUENCE [LARGE SCALE GENOMIC DNA]</scope>
    <source>
        <strain>O157:H7 / EDL933 / ATCC 700927 / EHEC</strain>
    </source>
</reference>
<reference key="2">
    <citation type="journal article" date="2001" name="DNA Res.">
        <title>Complete genome sequence of enterohemorrhagic Escherichia coli O157:H7 and genomic comparison with a laboratory strain K-12.</title>
        <authorList>
            <person name="Hayashi T."/>
            <person name="Makino K."/>
            <person name="Ohnishi M."/>
            <person name="Kurokawa K."/>
            <person name="Ishii K."/>
            <person name="Yokoyama K."/>
            <person name="Han C.-G."/>
            <person name="Ohtsubo E."/>
            <person name="Nakayama K."/>
            <person name="Murata T."/>
            <person name="Tanaka M."/>
            <person name="Tobe T."/>
            <person name="Iida T."/>
            <person name="Takami H."/>
            <person name="Honda T."/>
            <person name="Sasakawa C."/>
            <person name="Ogasawara N."/>
            <person name="Yasunaga T."/>
            <person name="Kuhara S."/>
            <person name="Shiba T."/>
            <person name="Hattori M."/>
            <person name="Shinagawa H."/>
        </authorList>
    </citation>
    <scope>NUCLEOTIDE SEQUENCE [LARGE SCALE GENOMIC DNA]</scope>
    <source>
        <strain>O157:H7 / Sakai / RIMD 0509952 / EHEC</strain>
    </source>
</reference>
<gene>
    <name type="primary">yadH</name>
    <name type="ordered locus">Z0139</name>
    <name type="ordered locus">ECs0132</name>
</gene>
<keyword id="KW-0997">Cell inner membrane</keyword>
<keyword id="KW-1003">Cell membrane</keyword>
<keyword id="KW-0472">Membrane</keyword>
<keyword id="KW-1185">Reference proteome</keyword>
<keyword id="KW-0812">Transmembrane</keyword>
<keyword id="KW-1133">Transmembrane helix</keyword>
<keyword id="KW-0813">Transport</keyword>
<dbReference type="EMBL" id="AE005174">
    <property type="protein sequence ID" value="AAG54432.1"/>
    <property type="molecule type" value="Genomic_DNA"/>
</dbReference>
<dbReference type="EMBL" id="BA000007">
    <property type="protein sequence ID" value="BAB33555.1"/>
    <property type="molecule type" value="Genomic_DNA"/>
</dbReference>
<dbReference type="PIR" id="D85496">
    <property type="entry name" value="D85496"/>
</dbReference>
<dbReference type="PIR" id="D90645">
    <property type="entry name" value="D90645"/>
</dbReference>
<dbReference type="RefSeq" id="NP_308159.1">
    <property type="nucleotide sequence ID" value="NC_002695.1"/>
</dbReference>
<dbReference type="RefSeq" id="WP_000972203.1">
    <property type="nucleotide sequence ID" value="NZ_VOAI01000002.1"/>
</dbReference>
<dbReference type="SMR" id="P0AFN8"/>
<dbReference type="STRING" id="155864.Z0139"/>
<dbReference type="GeneID" id="913717"/>
<dbReference type="KEGG" id="ece:Z0139"/>
<dbReference type="KEGG" id="ecs:ECs_0132"/>
<dbReference type="PATRIC" id="fig|386585.9.peg.231"/>
<dbReference type="eggNOG" id="COG0842">
    <property type="taxonomic scope" value="Bacteria"/>
</dbReference>
<dbReference type="HOGENOM" id="CLU_039483_3_0_6"/>
<dbReference type="OMA" id="VAWIFKT"/>
<dbReference type="Proteomes" id="UP000000558">
    <property type="component" value="Chromosome"/>
</dbReference>
<dbReference type="Proteomes" id="UP000002519">
    <property type="component" value="Chromosome"/>
</dbReference>
<dbReference type="GO" id="GO:0043190">
    <property type="term" value="C:ATP-binding cassette (ABC) transporter complex"/>
    <property type="evidence" value="ECO:0007669"/>
    <property type="project" value="InterPro"/>
</dbReference>
<dbReference type="GO" id="GO:0140359">
    <property type="term" value="F:ABC-type transporter activity"/>
    <property type="evidence" value="ECO:0007669"/>
    <property type="project" value="InterPro"/>
</dbReference>
<dbReference type="InterPro" id="IPR052522">
    <property type="entry name" value="ABC-2_transport_permease"/>
</dbReference>
<dbReference type="InterPro" id="IPR013525">
    <property type="entry name" value="ABC2_TM"/>
</dbReference>
<dbReference type="InterPro" id="IPR047817">
    <property type="entry name" value="ABC2_TM_bact-type"/>
</dbReference>
<dbReference type="InterPro" id="IPR000412">
    <property type="entry name" value="ABC_2_transport"/>
</dbReference>
<dbReference type="NCBIfam" id="NF011648">
    <property type="entry name" value="PRK15066.1"/>
    <property type="match status" value="1"/>
</dbReference>
<dbReference type="PANTHER" id="PTHR43332:SF2">
    <property type="entry name" value="INNER MEMBRANE TRANSPORT PERMEASE YADH"/>
    <property type="match status" value="1"/>
</dbReference>
<dbReference type="PANTHER" id="PTHR43332">
    <property type="entry name" value="INNER MEMBRANE TRANSPORT PERMEASE YADH-RELATED"/>
    <property type="match status" value="1"/>
</dbReference>
<dbReference type="Pfam" id="PF01061">
    <property type="entry name" value="ABC2_membrane"/>
    <property type="match status" value="1"/>
</dbReference>
<dbReference type="PIRSF" id="PIRSF006648">
    <property type="entry name" value="DrrB"/>
    <property type="match status" value="1"/>
</dbReference>
<dbReference type="PRINTS" id="PR00164">
    <property type="entry name" value="ABC2TRNSPORT"/>
</dbReference>
<dbReference type="PROSITE" id="PS51012">
    <property type="entry name" value="ABC_TM2"/>
    <property type="match status" value="1"/>
</dbReference>
<proteinExistence type="inferred from homology"/>
<feature type="chain" id="PRO_0000182999" description="Inner membrane transport permease YadH">
    <location>
        <begin position="1"/>
        <end position="256"/>
    </location>
</feature>
<feature type="topological domain" description="Periplasmic" evidence="2">
    <location>
        <begin position="1"/>
        <end position="22"/>
    </location>
</feature>
<feature type="transmembrane region" description="Helical" evidence="2">
    <location>
        <begin position="23"/>
        <end position="43"/>
    </location>
</feature>
<feature type="topological domain" description="Cytoplasmic" evidence="2">
    <location>
        <begin position="44"/>
        <end position="52"/>
    </location>
</feature>
<feature type="transmembrane region" description="Helical" evidence="2">
    <location>
        <begin position="53"/>
        <end position="73"/>
    </location>
</feature>
<feature type="topological domain" description="Periplasmic" evidence="2">
    <location>
        <begin position="74"/>
        <end position="94"/>
    </location>
</feature>
<feature type="transmembrane region" description="Helical" evidence="2">
    <location>
        <begin position="95"/>
        <end position="115"/>
    </location>
</feature>
<feature type="topological domain" description="Cytoplasmic" evidence="2">
    <location>
        <position position="116"/>
    </location>
</feature>
<feature type="transmembrane region" description="Helical" evidence="2">
    <location>
        <begin position="117"/>
        <end position="137"/>
    </location>
</feature>
<feature type="topological domain" description="Periplasmic" evidence="2">
    <location>
        <position position="138"/>
    </location>
</feature>
<feature type="transmembrane region" description="Helical" evidence="2">
    <location>
        <begin position="139"/>
        <end position="159"/>
    </location>
</feature>
<feature type="topological domain" description="Cytoplasmic" evidence="2">
    <location>
        <begin position="160"/>
        <end position="169"/>
    </location>
</feature>
<feature type="transmembrane region" description="Helical" evidence="2">
    <location>
        <begin position="170"/>
        <end position="190"/>
    </location>
</feature>
<feature type="topological domain" description="Periplasmic" evidence="2">
    <location>
        <begin position="191"/>
        <end position="223"/>
    </location>
</feature>
<feature type="transmembrane region" description="Helical" evidence="2">
    <location>
        <begin position="224"/>
        <end position="244"/>
    </location>
</feature>
<feature type="topological domain" description="Cytoplasmic" evidence="2">
    <location>
        <begin position="245"/>
        <end position="256"/>
    </location>
</feature>
<feature type="domain" description="ABC transmembrane type-2" evidence="3">
    <location>
        <begin position="22"/>
        <end position="251"/>
    </location>
</feature>
<name>YADH_ECO57</name>